<evidence type="ECO:0000250" key="1"/>
<evidence type="ECO:0000255" key="2">
    <source>
        <dbReference type="PROSITE-ProRule" id="PRU00108"/>
    </source>
</evidence>
<evidence type="ECO:0000256" key="3">
    <source>
        <dbReference type="SAM" id="MobiDB-lite"/>
    </source>
</evidence>
<evidence type="ECO:0000305" key="4"/>
<name>HXB1_CYPCA</name>
<comment type="function">
    <text evidence="1">Sequence-specific transcription factor which is part of a developmental regulatory system that provides cells with specific positional identities on the anterior-posterior axis. Acts on the anterior body structures (By similarity).</text>
</comment>
<comment type="subcellular location">
    <subcellularLocation>
        <location>Nucleus</location>
    </subcellularLocation>
</comment>
<comment type="similarity">
    <text evidence="4">Belongs to the Antp homeobox family. Labial subfamily.</text>
</comment>
<comment type="sequence caution" evidence="4">
    <conflict type="erroneous initiation">
        <sequence resource="EMBL-CDS" id="CAA62553"/>
    </conflict>
</comment>
<organism>
    <name type="scientific">Cyprinus carpio</name>
    <name type="common">Common carp</name>
    <dbReference type="NCBI Taxonomy" id="7962"/>
    <lineage>
        <taxon>Eukaryota</taxon>
        <taxon>Metazoa</taxon>
        <taxon>Chordata</taxon>
        <taxon>Craniata</taxon>
        <taxon>Vertebrata</taxon>
        <taxon>Euteleostomi</taxon>
        <taxon>Actinopterygii</taxon>
        <taxon>Neopterygii</taxon>
        <taxon>Teleostei</taxon>
        <taxon>Ostariophysi</taxon>
        <taxon>Cypriniformes</taxon>
        <taxon>Cyprinidae</taxon>
        <taxon>Cyprininae</taxon>
        <taxon>Cyprinus</taxon>
    </lineage>
</organism>
<dbReference type="EMBL" id="X91079">
    <property type="protein sequence ID" value="CAA62554.1"/>
    <property type="molecule type" value="mRNA"/>
</dbReference>
<dbReference type="EMBL" id="X91079">
    <property type="protein sequence ID" value="CAA62553.1"/>
    <property type="status" value="ALT_INIT"/>
    <property type="molecule type" value="mRNA"/>
</dbReference>
<dbReference type="SMR" id="Q90346"/>
<dbReference type="Proteomes" id="UP000694384">
    <property type="component" value="Unplaced"/>
</dbReference>
<dbReference type="Proteomes" id="UP000694427">
    <property type="component" value="Unplaced"/>
</dbReference>
<dbReference type="Proteomes" id="UP000694700">
    <property type="component" value="Unplaced"/>
</dbReference>
<dbReference type="Proteomes" id="UP000694701">
    <property type="component" value="Unplaced"/>
</dbReference>
<dbReference type="Proteomes" id="UP001155660">
    <property type="component" value="Unplaced"/>
</dbReference>
<dbReference type="GO" id="GO:0005634">
    <property type="term" value="C:nucleus"/>
    <property type="evidence" value="ECO:0007669"/>
    <property type="project" value="UniProtKB-SubCell"/>
</dbReference>
<dbReference type="GO" id="GO:0000981">
    <property type="term" value="F:DNA-binding transcription factor activity, RNA polymerase II-specific"/>
    <property type="evidence" value="ECO:0007669"/>
    <property type="project" value="InterPro"/>
</dbReference>
<dbReference type="GO" id="GO:0000978">
    <property type="term" value="F:RNA polymerase II cis-regulatory region sequence-specific DNA binding"/>
    <property type="evidence" value="ECO:0007669"/>
    <property type="project" value="TreeGrafter"/>
</dbReference>
<dbReference type="CDD" id="cd00086">
    <property type="entry name" value="homeodomain"/>
    <property type="match status" value="1"/>
</dbReference>
<dbReference type="FunFam" id="1.10.10.60:FF:000113">
    <property type="entry name" value="homeobox protein Hox-B1"/>
    <property type="match status" value="1"/>
</dbReference>
<dbReference type="Gene3D" id="1.10.10.60">
    <property type="entry name" value="Homeodomain-like"/>
    <property type="match status" value="1"/>
</dbReference>
<dbReference type="InterPro" id="IPR001356">
    <property type="entry name" value="HD"/>
</dbReference>
<dbReference type="InterPro" id="IPR020479">
    <property type="entry name" value="HD_metazoa"/>
</dbReference>
<dbReference type="InterPro" id="IPR017970">
    <property type="entry name" value="Homeobox_CS"/>
</dbReference>
<dbReference type="InterPro" id="IPR009057">
    <property type="entry name" value="Homeodomain-like_sf"/>
</dbReference>
<dbReference type="InterPro" id="IPR046327">
    <property type="entry name" value="HXA1/B1/D1"/>
</dbReference>
<dbReference type="PANTHER" id="PTHR45946:SF5">
    <property type="entry name" value="HOMEOBOX PROTEIN HOX-B1"/>
    <property type="match status" value="1"/>
</dbReference>
<dbReference type="PANTHER" id="PTHR45946">
    <property type="entry name" value="HOMEOBOX PROTEIN ROUGH-RELATED"/>
    <property type="match status" value="1"/>
</dbReference>
<dbReference type="Pfam" id="PF00046">
    <property type="entry name" value="Homeodomain"/>
    <property type="match status" value="1"/>
</dbReference>
<dbReference type="PRINTS" id="PR00024">
    <property type="entry name" value="HOMEOBOX"/>
</dbReference>
<dbReference type="SMART" id="SM00389">
    <property type="entry name" value="HOX"/>
    <property type="match status" value="1"/>
</dbReference>
<dbReference type="SUPFAM" id="SSF46689">
    <property type="entry name" value="Homeodomain-like"/>
    <property type="match status" value="1"/>
</dbReference>
<dbReference type="PROSITE" id="PS00027">
    <property type="entry name" value="HOMEOBOX_1"/>
    <property type="match status" value="1"/>
</dbReference>
<dbReference type="PROSITE" id="PS50071">
    <property type="entry name" value="HOMEOBOX_2"/>
    <property type="match status" value="1"/>
</dbReference>
<protein>
    <recommendedName>
        <fullName>Homeobox protein Hox-B1</fullName>
    </recommendedName>
</protein>
<reference key="1">
    <citation type="journal article" date="1996" name="Int. J. Dev. Biol.">
        <title>Expression of Hoxb-1 during gastrulation and segmentation stages of carp (Cyprinus carpio).</title>
        <authorList>
            <person name="Stevens C.J.M."/>
            <person name="Samallo J."/>
            <person name="Schipper H."/>
            <person name="Stroband H.W.J."/>
            <person name="Te Kronnie G."/>
        </authorList>
    </citation>
    <scope>NUCLEOTIDE SEQUENCE [MRNA]</scope>
</reference>
<sequence length="315" mass="34781">MDNSSMNSFLEYTICNRGTNAYSPKAGYQHLDQALSGPFHTGHARYSHNADGRLYIGGSNQPAAAQHQHQSGVYAHHQHQTHQSGIGLTYGGTGTTSYGTQACANPDYAQHQYFINPEQDGMYYHSSGFSNSNLGPHYGSMAGAYCGAQGAVPAAPYQHHGCEGQDHQRGYSQGTYADLSRSQGRERDTDQSPPGKTFDWMKVKRNPPKTAKVADYGLGPQNTIRTNFTTKQLTELEKEFHFSKYLTRARRVEIAATLELNETQVKIWFQNRRMKQKKREKEGLAPASSTLSKDLEDHSDHSTSTSPGASPSPDS</sequence>
<proteinExistence type="evidence at transcript level"/>
<gene>
    <name type="primary">hoxb1</name>
</gene>
<feature type="chain" id="PRO_0000200112" description="Homeobox protein Hox-B1">
    <location>
        <begin position="1"/>
        <end position="315"/>
    </location>
</feature>
<feature type="DNA-binding region" description="Homeobox" evidence="2">
    <location>
        <begin position="221"/>
        <end position="280"/>
    </location>
</feature>
<feature type="region of interest" description="Disordered" evidence="3">
    <location>
        <begin position="177"/>
        <end position="200"/>
    </location>
</feature>
<feature type="region of interest" description="Disordered" evidence="3">
    <location>
        <begin position="272"/>
        <end position="315"/>
    </location>
</feature>
<feature type="short sequence motif" description="Antp-type hexapeptide">
    <location>
        <begin position="197"/>
        <end position="202"/>
    </location>
</feature>
<feature type="compositionally biased region" description="Low complexity" evidence="3">
    <location>
        <begin position="302"/>
        <end position="315"/>
    </location>
</feature>
<accession>Q90346</accession>
<accession>Q90345</accession>
<keyword id="KW-0217">Developmental protein</keyword>
<keyword id="KW-0238">DNA-binding</keyword>
<keyword id="KW-0371">Homeobox</keyword>
<keyword id="KW-0539">Nucleus</keyword>
<keyword id="KW-1185">Reference proteome</keyword>
<keyword id="KW-0804">Transcription</keyword>
<keyword id="KW-0805">Transcription regulation</keyword>